<gene>
    <name evidence="1" type="primary">dksA</name>
    <name type="ordered locus">CCNA_02663</name>
</gene>
<reference key="1">
    <citation type="journal article" date="1998" name="J. Bacteriol.">
        <title>A membrane-associated protein, FliX, is required for an early step in Caulobacter flagellar assembly.</title>
        <authorList>
            <person name="Mohr C.D."/>
            <person name="MacKichan J.K."/>
            <person name="Shapiro L."/>
        </authorList>
    </citation>
    <scope>NUCLEOTIDE SEQUENCE [GENOMIC DNA]</scope>
</reference>
<reference key="2">
    <citation type="journal article" date="2010" name="J. Bacteriol.">
        <title>The genetic basis of laboratory adaptation in Caulobacter crescentus.</title>
        <authorList>
            <person name="Marks M.E."/>
            <person name="Castro-Rojas C.M."/>
            <person name="Teiling C."/>
            <person name="Du L."/>
            <person name="Kapatral V."/>
            <person name="Walunas T.L."/>
            <person name="Crosson S."/>
        </authorList>
    </citation>
    <scope>NUCLEOTIDE SEQUENCE [LARGE SCALE GENOMIC DNA]</scope>
    <source>
        <strain>NA1000 / CB15N</strain>
    </source>
</reference>
<feature type="chain" id="PRO_0000378283" description="RNA polymerase-binding transcription factor DksA">
    <location>
        <begin position="1"/>
        <end position="142"/>
    </location>
</feature>
<feature type="zinc finger region" description="dksA C4-type" evidence="1">
    <location>
        <begin position="104"/>
        <end position="128"/>
    </location>
</feature>
<feature type="region of interest" description="Disordered" evidence="2">
    <location>
        <begin position="1"/>
        <end position="20"/>
    </location>
</feature>
<feature type="region of interest" description="Disordered" evidence="2">
    <location>
        <begin position="51"/>
        <end position="70"/>
    </location>
</feature>
<feature type="region of interest" description="Disordered" evidence="2">
    <location>
        <begin position="119"/>
        <end position="142"/>
    </location>
</feature>
<feature type="compositionally biased region" description="Basic and acidic residues" evidence="2">
    <location>
        <begin position="128"/>
        <end position="142"/>
    </location>
</feature>
<feature type="sequence conflict" description="In Ref. 1; AAC38353." evidence="3" ref="1">
    <original>R</original>
    <variation>P</variation>
    <location>
        <position position="137"/>
    </location>
</feature>
<keyword id="KW-0963">Cytoplasm</keyword>
<keyword id="KW-0479">Metal-binding</keyword>
<keyword id="KW-1185">Reference proteome</keyword>
<keyword id="KW-0862">Zinc</keyword>
<keyword id="KW-0863">Zinc-finger</keyword>
<dbReference type="EMBL" id="AF034413">
    <property type="protein sequence ID" value="AAC38353.1"/>
    <property type="molecule type" value="Genomic_DNA"/>
</dbReference>
<dbReference type="EMBL" id="CP001340">
    <property type="protein sequence ID" value="ACL96128.1"/>
    <property type="molecule type" value="Genomic_DNA"/>
</dbReference>
<dbReference type="RefSeq" id="WP_010920436.1">
    <property type="nucleotide sequence ID" value="NC_011916.1"/>
</dbReference>
<dbReference type="RefSeq" id="YP_002518036.1">
    <property type="nucleotide sequence ID" value="NC_011916.1"/>
</dbReference>
<dbReference type="SMR" id="B8H0C0"/>
<dbReference type="GeneID" id="7332766"/>
<dbReference type="KEGG" id="ccs:CCNA_02663"/>
<dbReference type="PATRIC" id="fig|565050.3.peg.2611"/>
<dbReference type="HOGENOM" id="CLU_043144_2_2_5"/>
<dbReference type="OrthoDB" id="9803742at2"/>
<dbReference type="PhylomeDB" id="B8H0C0"/>
<dbReference type="Proteomes" id="UP000001364">
    <property type="component" value="Chromosome"/>
</dbReference>
<dbReference type="GO" id="GO:0005737">
    <property type="term" value="C:cytoplasm"/>
    <property type="evidence" value="ECO:0007669"/>
    <property type="project" value="UniProtKB-SubCell"/>
</dbReference>
<dbReference type="GO" id="GO:0008270">
    <property type="term" value="F:zinc ion binding"/>
    <property type="evidence" value="ECO:0007669"/>
    <property type="project" value="UniProtKB-UniRule"/>
</dbReference>
<dbReference type="GO" id="GO:0010468">
    <property type="term" value="P:regulation of gene expression"/>
    <property type="evidence" value="ECO:0007669"/>
    <property type="project" value="UniProtKB-UniRule"/>
</dbReference>
<dbReference type="Gene3D" id="1.20.120.910">
    <property type="entry name" value="DksA, coiled-coil domain"/>
    <property type="match status" value="1"/>
</dbReference>
<dbReference type="HAMAP" id="MF_00926">
    <property type="entry name" value="DksA"/>
    <property type="match status" value="1"/>
</dbReference>
<dbReference type="InterPro" id="IPR048489">
    <property type="entry name" value="DksA_N"/>
</dbReference>
<dbReference type="InterPro" id="IPR012784">
    <property type="entry name" value="DksA_RNA_pol-bd"/>
</dbReference>
<dbReference type="InterPro" id="IPR037187">
    <property type="entry name" value="DnaK_N"/>
</dbReference>
<dbReference type="InterPro" id="IPR000962">
    <property type="entry name" value="Znf_DskA_TraR"/>
</dbReference>
<dbReference type="InterPro" id="IPR020458">
    <property type="entry name" value="Znf_DskA_TraR_CS"/>
</dbReference>
<dbReference type="NCBIfam" id="TIGR02420">
    <property type="entry name" value="dksA"/>
    <property type="match status" value="1"/>
</dbReference>
<dbReference type="PANTHER" id="PTHR33823:SF2">
    <property type="entry name" value="RNA POLYMERASE-BINDING TRANSCRIPTION FACTOR DKSA"/>
    <property type="match status" value="1"/>
</dbReference>
<dbReference type="PANTHER" id="PTHR33823">
    <property type="entry name" value="RNA POLYMERASE-BINDING TRANSCRIPTION FACTOR DKSA-RELATED"/>
    <property type="match status" value="1"/>
</dbReference>
<dbReference type="Pfam" id="PF21157">
    <property type="entry name" value="DksA_N"/>
    <property type="match status" value="1"/>
</dbReference>
<dbReference type="Pfam" id="PF01258">
    <property type="entry name" value="zf-dskA_traR"/>
    <property type="match status" value="1"/>
</dbReference>
<dbReference type="SUPFAM" id="SSF109635">
    <property type="entry name" value="DnaK suppressor protein DksA, alpha-hairpin domain"/>
    <property type="match status" value="1"/>
</dbReference>
<dbReference type="SUPFAM" id="SSF57716">
    <property type="entry name" value="Glucocorticoid receptor-like (DNA-binding domain)"/>
    <property type="match status" value="1"/>
</dbReference>
<dbReference type="PROSITE" id="PS01102">
    <property type="entry name" value="ZF_DKSA_1"/>
    <property type="match status" value="1"/>
</dbReference>
<dbReference type="PROSITE" id="PS51128">
    <property type="entry name" value="ZF_DKSA_2"/>
    <property type="match status" value="1"/>
</dbReference>
<sequence>MQTATVLVEKSDYRPSEDEPFMNDRQLEYFKQKLLAWKEEILRESRETVSHLQKETENHADLADRASSETDRALELRTRDRQRKLISKIDQALRRVEDGSYGYCEETGEPIGLARLEARPTATMSVEAQERHERRERVHRDD</sequence>
<organism>
    <name type="scientific">Caulobacter vibrioides (strain NA1000 / CB15N)</name>
    <name type="common">Caulobacter crescentus</name>
    <dbReference type="NCBI Taxonomy" id="565050"/>
    <lineage>
        <taxon>Bacteria</taxon>
        <taxon>Pseudomonadati</taxon>
        <taxon>Pseudomonadota</taxon>
        <taxon>Alphaproteobacteria</taxon>
        <taxon>Caulobacterales</taxon>
        <taxon>Caulobacteraceae</taxon>
        <taxon>Caulobacter</taxon>
    </lineage>
</organism>
<proteinExistence type="inferred from homology"/>
<accession>B8H0C0</accession>
<accession>O32347</accession>
<protein>
    <recommendedName>
        <fullName evidence="1">RNA polymerase-binding transcription factor DksA</fullName>
    </recommendedName>
</protein>
<evidence type="ECO:0000255" key="1">
    <source>
        <dbReference type="HAMAP-Rule" id="MF_00926"/>
    </source>
</evidence>
<evidence type="ECO:0000256" key="2">
    <source>
        <dbReference type="SAM" id="MobiDB-lite"/>
    </source>
</evidence>
<evidence type="ECO:0000305" key="3"/>
<name>DKSA_CAUVN</name>
<comment type="function">
    <text evidence="1">Transcription factor that acts by binding directly to the RNA polymerase (RNAP). Required for negative regulation of rRNA expression and positive regulation of several amino acid biosynthesis promoters.</text>
</comment>
<comment type="subunit">
    <text evidence="1">Interacts directly with the RNA polymerase.</text>
</comment>
<comment type="subcellular location">
    <subcellularLocation>
        <location evidence="1">Cytoplasm</location>
    </subcellularLocation>
</comment>
<comment type="similarity">
    <text evidence="1">Belongs to the DksA family.</text>
</comment>